<sequence>MKTLAIDEEQLFLSKTIFEEEVYGEGFSIIAGVDEVGRGPLAGPVVAGACILPRGKIFAGVNDSKKLTPKERGKIRDILLNDPDVCYGIGVVSVERIDEINILEATKEAMAKAIANLSVHPDFLLIDGLHLPHKIPCKKIIKGDSKSASIAAASIIAKEYRDDLMRELHQRYPNYGFDKHKGYGTAAHLAALRAFGPCDCHRKSFAPIRQVV</sequence>
<accession>Q822M7</accession>
<name>RNH2_CHLCV</name>
<keyword id="KW-0963">Cytoplasm</keyword>
<keyword id="KW-0255">Endonuclease</keyword>
<keyword id="KW-0378">Hydrolase</keyword>
<keyword id="KW-0464">Manganese</keyword>
<keyword id="KW-0479">Metal-binding</keyword>
<keyword id="KW-0540">Nuclease</keyword>
<evidence type="ECO:0000255" key="1">
    <source>
        <dbReference type="HAMAP-Rule" id="MF_00052"/>
    </source>
</evidence>
<evidence type="ECO:0000255" key="2">
    <source>
        <dbReference type="PROSITE-ProRule" id="PRU01319"/>
    </source>
</evidence>
<proteinExistence type="inferred from homology"/>
<protein>
    <recommendedName>
        <fullName evidence="1">Ribonuclease HII</fullName>
        <shortName evidence="1">RNase HII</shortName>
        <ecNumber evidence="1">3.1.26.4</ecNumber>
    </recommendedName>
</protein>
<feature type="chain" id="PRO_0000111558" description="Ribonuclease HII">
    <location>
        <begin position="1"/>
        <end position="212"/>
    </location>
</feature>
<feature type="domain" description="RNase H type-2" evidence="2">
    <location>
        <begin position="28"/>
        <end position="212"/>
    </location>
</feature>
<feature type="binding site" evidence="1">
    <location>
        <position position="34"/>
    </location>
    <ligand>
        <name>a divalent metal cation</name>
        <dbReference type="ChEBI" id="CHEBI:60240"/>
    </ligand>
</feature>
<feature type="binding site" evidence="1">
    <location>
        <position position="35"/>
    </location>
    <ligand>
        <name>a divalent metal cation</name>
        <dbReference type="ChEBI" id="CHEBI:60240"/>
    </ligand>
</feature>
<feature type="binding site" evidence="1">
    <location>
        <position position="127"/>
    </location>
    <ligand>
        <name>a divalent metal cation</name>
        <dbReference type="ChEBI" id="CHEBI:60240"/>
    </ligand>
</feature>
<comment type="function">
    <text evidence="1">Endonuclease that specifically degrades the RNA of RNA-DNA hybrids.</text>
</comment>
<comment type="catalytic activity">
    <reaction evidence="1">
        <text>Endonucleolytic cleavage to 5'-phosphomonoester.</text>
        <dbReference type="EC" id="3.1.26.4"/>
    </reaction>
</comment>
<comment type="cofactor">
    <cofactor evidence="1">
        <name>Mn(2+)</name>
        <dbReference type="ChEBI" id="CHEBI:29035"/>
    </cofactor>
    <cofactor evidence="1">
        <name>Mg(2+)</name>
        <dbReference type="ChEBI" id="CHEBI:18420"/>
    </cofactor>
    <text evidence="1">Manganese or magnesium. Binds 1 divalent metal ion per monomer in the absence of substrate. May bind a second metal ion after substrate binding.</text>
</comment>
<comment type="subcellular location">
    <subcellularLocation>
        <location evidence="1">Cytoplasm</location>
    </subcellularLocation>
</comment>
<comment type="similarity">
    <text evidence="1">Belongs to the RNase HII family.</text>
</comment>
<gene>
    <name evidence="1" type="primary">rnhB</name>
    <name type="ordered locus">CCA_00654</name>
</gene>
<organism>
    <name type="scientific">Chlamydia caviae (strain ATCC VR-813 / DSM 19441 / 03DC25 / GPIC)</name>
    <name type="common">Chlamydophila caviae</name>
    <dbReference type="NCBI Taxonomy" id="227941"/>
    <lineage>
        <taxon>Bacteria</taxon>
        <taxon>Pseudomonadati</taxon>
        <taxon>Chlamydiota</taxon>
        <taxon>Chlamydiia</taxon>
        <taxon>Chlamydiales</taxon>
        <taxon>Chlamydiaceae</taxon>
        <taxon>Chlamydia/Chlamydophila group</taxon>
        <taxon>Chlamydia</taxon>
    </lineage>
</organism>
<dbReference type="EC" id="3.1.26.4" evidence="1"/>
<dbReference type="EMBL" id="AE015925">
    <property type="protein sequence ID" value="AAP05396.1"/>
    <property type="molecule type" value="Genomic_DNA"/>
</dbReference>
<dbReference type="RefSeq" id="WP_011006611.1">
    <property type="nucleotide sequence ID" value="NC_003361.3"/>
</dbReference>
<dbReference type="SMR" id="Q822M7"/>
<dbReference type="STRING" id="227941.CCA_00654"/>
<dbReference type="KEGG" id="cca:CCA_00654"/>
<dbReference type="eggNOG" id="COG0164">
    <property type="taxonomic scope" value="Bacteria"/>
</dbReference>
<dbReference type="HOGENOM" id="CLU_036532_3_2_0"/>
<dbReference type="OrthoDB" id="9803420at2"/>
<dbReference type="Proteomes" id="UP000002193">
    <property type="component" value="Chromosome"/>
</dbReference>
<dbReference type="GO" id="GO:0005737">
    <property type="term" value="C:cytoplasm"/>
    <property type="evidence" value="ECO:0007669"/>
    <property type="project" value="UniProtKB-SubCell"/>
</dbReference>
<dbReference type="GO" id="GO:0032299">
    <property type="term" value="C:ribonuclease H2 complex"/>
    <property type="evidence" value="ECO:0007669"/>
    <property type="project" value="TreeGrafter"/>
</dbReference>
<dbReference type="GO" id="GO:0030145">
    <property type="term" value="F:manganese ion binding"/>
    <property type="evidence" value="ECO:0007669"/>
    <property type="project" value="UniProtKB-UniRule"/>
</dbReference>
<dbReference type="GO" id="GO:0003723">
    <property type="term" value="F:RNA binding"/>
    <property type="evidence" value="ECO:0007669"/>
    <property type="project" value="InterPro"/>
</dbReference>
<dbReference type="GO" id="GO:0004523">
    <property type="term" value="F:RNA-DNA hybrid ribonuclease activity"/>
    <property type="evidence" value="ECO:0007669"/>
    <property type="project" value="UniProtKB-UniRule"/>
</dbReference>
<dbReference type="GO" id="GO:0043137">
    <property type="term" value="P:DNA replication, removal of RNA primer"/>
    <property type="evidence" value="ECO:0007669"/>
    <property type="project" value="TreeGrafter"/>
</dbReference>
<dbReference type="GO" id="GO:0006298">
    <property type="term" value="P:mismatch repair"/>
    <property type="evidence" value="ECO:0007669"/>
    <property type="project" value="TreeGrafter"/>
</dbReference>
<dbReference type="CDD" id="cd07182">
    <property type="entry name" value="RNase_HII_bacteria_HII_like"/>
    <property type="match status" value="1"/>
</dbReference>
<dbReference type="FunFam" id="3.30.420.10:FF:000006">
    <property type="entry name" value="Ribonuclease HII"/>
    <property type="match status" value="1"/>
</dbReference>
<dbReference type="Gene3D" id="3.30.420.10">
    <property type="entry name" value="Ribonuclease H-like superfamily/Ribonuclease H"/>
    <property type="match status" value="1"/>
</dbReference>
<dbReference type="HAMAP" id="MF_00052_B">
    <property type="entry name" value="RNase_HII_B"/>
    <property type="match status" value="1"/>
</dbReference>
<dbReference type="InterPro" id="IPR022898">
    <property type="entry name" value="RNase_HII"/>
</dbReference>
<dbReference type="InterPro" id="IPR001352">
    <property type="entry name" value="RNase_HII/HIII"/>
</dbReference>
<dbReference type="InterPro" id="IPR024567">
    <property type="entry name" value="RNase_HII/HIII_dom"/>
</dbReference>
<dbReference type="InterPro" id="IPR012337">
    <property type="entry name" value="RNaseH-like_sf"/>
</dbReference>
<dbReference type="InterPro" id="IPR036397">
    <property type="entry name" value="RNaseH_sf"/>
</dbReference>
<dbReference type="NCBIfam" id="NF000594">
    <property type="entry name" value="PRK00015.1-1"/>
    <property type="match status" value="1"/>
</dbReference>
<dbReference type="NCBIfam" id="NF000595">
    <property type="entry name" value="PRK00015.1-3"/>
    <property type="match status" value="1"/>
</dbReference>
<dbReference type="PANTHER" id="PTHR10954">
    <property type="entry name" value="RIBONUCLEASE H2 SUBUNIT A"/>
    <property type="match status" value="1"/>
</dbReference>
<dbReference type="PANTHER" id="PTHR10954:SF18">
    <property type="entry name" value="RIBONUCLEASE HII"/>
    <property type="match status" value="1"/>
</dbReference>
<dbReference type="Pfam" id="PF01351">
    <property type="entry name" value="RNase_HII"/>
    <property type="match status" value="1"/>
</dbReference>
<dbReference type="SUPFAM" id="SSF53098">
    <property type="entry name" value="Ribonuclease H-like"/>
    <property type="match status" value="1"/>
</dbReference>
<dbReference type="PROSITE" id="PS51975">
    <property type="entry name" value="RNASE_H_2"/>
    <property type="match status" value="1"/>
</dbReference>
<reference key="1">
    <citation type="journal article" date="2003" name="Nucleic Acids Res.">
        <title>Genome sequence of Chlamydophila caviae (Chlamydia psittaci GPIC): examining the role of niche-specific genes in the evolution of the Chlamydiaceae.</title>
        <authorList>
            <person name="Read T.D."/>
            <person name="Myers G.S.A."/>
            <person name="Brunham R.C."/>
            <person name="Nelson W.C."/>
            <person name="Paulsen I.T."/>
            <person name="Heidelberg J.F."/>
            <person name="Holtzapple E.K."/>
            <person name="Khouri H.M."/>
            <person name="Federova N.B."/>
            <person name="Carty H.A."/>
            <person name="Umayam L.A."/>
            <person name="Haft D.H."/>
            <person name="Peterson J.D."/>
            <person name="Beanan M.J."/>
            <person name="White O."/>
            <person name="Salzberg S.L."/>
            <person name="Hsia R.-C."/>
            <person name="McClarty G."/>
            <person name="Rank R.G."/>
            <person name="Bavoil P.M."/>
            <person name="Fraser C.M."/>
        </authorList>
    </citation>
    <scope>NUCLEOTIDE SEQUENCE [LARGE SCALE GENOMIC DNA]</scope>
    <source>
        <strain>ATCC VR-813 / DSM 19441 / 03DC25 / GPIC</strain>
    </source>
</reference>